<organism>
    <name type="scientific">Lactobacillus gasseri (strain ATCC 33323 / DSM 20243 / BCRC 14619 / CIP 102991 / JCM 1131 / KCTC 3163 / NCIMB 11718 / NCTC 13722 / AM63)</name>
    <dbReference type="NCBI Taxonomy" id="324831"/>
    <lineage>
        <taxon>Bacteria</taxon>
        <taxon>Bacillati</taxon>
        <taxon>Bacillota</taxon>
        <taxon>Bacilli</taxon>
        <taxon>Lactobacillales</taxon>
        <taxon>Lactobacillaceae</taxon>
        <taxon>Lactobacillus</taxon>
    </lineage>
</organism>
<accession>Q041T4</accession>
<reference key="1">
    <citation type="journal article" date="2006" name="Proc. Natl. Acad. Sci. U.S.A.">
        <title>Comparative genomics of the lactic acid bacteria.</title>
        <authorList>
            <person name="Makarova K.S."/>
            <person name="Slesarev A."/>
            <person name="Wolf Y.I."/>
            <person name="Sorokin A."/>
            <person name="Mirkin B."/>
            <person name="Koonin E.V."/>
            <person name="Pavlov A."/>
            <person name="Pavlova N."/>
            <person name="Karamychev V."/>
            <person name="Polouchine N."/>
            <person name="Shakhova V."/>
            <person name="Grigoriev I."/>
            <person name="Lou Y."/>
            <person name="Rohksar D."/>
            <person name="Lucas S."/>
            <person name="Huang K."/>
            <person name="Goodstein D.M."/>
            <person name="Hawkins T."/>
            <person name="Plengvidhya V."/>
            <person name="Welker D."/>
            <person name="Hughes J."/>
            <person name="Goh Y."/>
            <person name="Benson A."/>
            <person name="Baldwin K."/>
            <person name="Lee J.-H."/>
            <person name="Diaz-Muniz I."/>
            <person name="Dosti B."/>
            <person name="Smeianov V."/>
            <person name="Wechter W."/>
            <person name="Barabote R."/>
            <person name="Lorca G."/>
            <person name="Altermann E."/>
            <person name="Barrangou R."/>
            <person name="Ganesan B."/>
            <person name="Xie Y."/>
            <person name="Rawsthorne H."/>
            <person name="Tamir D."/>
            <person name="Parker C."/>
            <person name="Breidt F."/>
            <person name="Broadbent J.R."/>
            <person name="Hutkins R."/>
            <person name="O'Sullivan D."/>
            <person name="Steele J."/>
            <person name="Unlu G."/>
            <person name="Saier M.H. Jr."/>
            <person name="Klaenhammer T."/>
            <person name="Richardson P."/>
            <person name="Kozyavkin S."/>
            <person name="Weimer B.C."/>
            <person name="Mills D.A."/>
        </authorList>
    </citation>
    <scope>NUCLEOTIDE SEQUENCE [LARGE SCALE GENOMIC DNA]</scope>
    <source>
        <strain>ATCC 33323 / DSM 20243 / BCRC 14619 / CIP 102991 / JCM 1131 / KCTC 3163 / NCIMB 11718 / NCTC 13722 / AM63</strain>
    </source>
</reference>
<gene>
    <name evidence="1" type="primary">murC</name>
    <name type="ordered locus">LGAS_1427</name>
</gene>
<dbReference type="EC" id="6.3.2.8" evidence="1"/>
<dbReference type="EMBL" id="CP000413">
    <property type="protein sequence ID" value="ABJ60788.1"/>
    <property type="molecule type" value="Genomic_DNA"/>
</dbReference>
<dbReference type="RefSeq" id="WP_003646901.1">
    <property type="nucleotide sequence ID" value="NZ_WBMG01000003.1"/>
</dbReference>
<dbReference type="SMR" id="Q041T4"/>
<dbReference type="GeneID" id="29640124"/>
<dbReference type="KEGG" id="lga:LGAS_1427"/>
<dbReference type="HOGENOM" id="CLU_028104_1_0_9"/>
<dbReference type="BioCyc" id="LGAS324831:G1G6Y-1422-MONOMER"/>
<dbReference type="UniPathway" id="UPA00219"/>
<dbReference type="Proteomes" id="UP000000664">
    <property type="component" value="Chromosome"/>
</dbReference>
<dbReference type="GO" id="GO:0005737">
    <property type="term" value="C:cytoplasm"/>
    <property type="evidence" value="ECO:0007669"/>
    <property type="project" value="UniProtKB-SubCell"/>
</dbReference>
<dbReference type="GO" id="GO:0005524">
    <property type="term" value="F:ATP binding"/>
    <property type="evidence" value="ECO:0007669"/>
    <property type="project" value="UniProtKB-UniRule"/>
</dbReference>
<dbReference type="GO" id="GO:0008763">
    <property type="term" value="F:UDP-N-acetylmuramate-L-alanine ligase activity"/>
    <property type="evidence" value="ECO:0007669"/>
    <property type="project" value="UniProtKB-UniRule"/>
</dbReference>
<dbReference type="GO" id="GO:0051301">
    <property type="term" value="P:cell division"/>
    <property type="evidence" value="ECO:0007669"/>
    <property type="project" value="UniProtKB-KW"/>
</dbReference>
<dbReference type="GO" id="GO:0071555">
    <property type="term" value="P:cell wall organization"/>
    <property type="evidence" value="ECO:0007669"/>
    <property type="project" value="UniProtKB-KW"/>
</dbReference>
<dbReference type="GO" id="GO:0009252">
    <property type="term" value="P:peptidoglycan biosynthetic process"/>
    <property type="evidence" value="ECO:0007669"/>
    <property type="project" value="UniProtKB-UniRule"/>
</dbReference>
<dbReference type="GO" id="GO:0008360">
    <property type="term" value="P:regulation of cell shape"/>
    <property type="evidence" value="ECO:0007669"/>
    <property type="project" value="UniProtKB-KW"/>
</dbReference>
<dbReference type="Gene3D" id="3.90.190.20">
    <property type="entry name" value="Mur ligase, C-terminal domain"/>
    <property type="match status" value="1"/>
</dbReference>
<dbReference type="Gene3D" id="3.40.1190.10">
    <property type="entry name" value="Mur-like, catalytic domain"/>
    <property type="match status" value="1"/>
</dbReference>
<dbReference type="Gene3D" id="3.40.50.720">
    <property type="entry name" value="NAD(P)-binding Rossmann-like Domain"/>
    <property type="match status" value="1"/>
</dbReference>
<dbReference type="HAMAP" id="MF_00046">
    <property type="entry name" value="MurC"/>
    <property type="match status" value="1"/>
</dbReference>
<dbReference type="InterPro" id="IPR036565">
    <property type="entry name" value="Mur-like_cat_sf"/>
</dbReference>
<dbReference type="InterPro" id="IPR004101">
    <property type="entry name" value="Mur_ligase_C"/>
</dbReference>
<dbReference type="InterPro" id="IPR036615">
    <property type="entry name" value="Mur_ligase_C_dom_sf"/>
</dbReference>
<dbReference type="InterPro" id="IPR013221">
    <property type="entry name" value="Mur_ligase_cen"/>
</dbReference>
<dbReference type="InterPro" id="IPR000713">
    <property type="entry name" value="Mur_ligase_N"/>
</dbReference>
<dbReference type="InterPro" id="IPR050061">
    <property type="entry name" value="MurCDEF_pg_biosynth"/>
</dbReference>
<dbReference type="InterPro" id="IPR005758">
    <property type="entry name" value="UDP-N-AcMur_Ala_ligase_MurC"/>
</dbReference>
<dbReference type="NCBIfam" id="TIGR01082">
    <property type="entry name" value="murC"/>
    <property type="match status" value="1"/>
</dbReference>
<dbReference type="PANTHER" id="PTHR43445:SF3">
    <property type="entry name" value="UDP-N-ACETYLMURAMATE--L-ALANINE LIGASE"/>
    <property type="match status" value="1"/>
</dbReference>
<dbReference type="PANTHER" id="PTHR43445">
    <property type="entry name" value="UDP-N-ACETYLMURAMATE--L-ALANINE LIGASE-RELATED"/>
    <property type="match status" value="1"/>
</dbReference>
<dbReference type="Pfam" id="PF01225">
    <property type="entry name" value="Mur_ligase"/>
    <property type="match status" value="1"/>
</dbReference>
<dbReference type="Pfam" id="PF02875">
    <property type="entry name" value="Mur_ligase_C"/>
    <property type="match status" value="1"/>
</dbReference>
<dbReference type="Pfam" id="PF08245">
    <property type="entry name" value="Mur_ligase_M"/>
    <property type="match status" value="1"/>
</dbReference>
<dbReference type="SUPFAM" id="SSF51984">
    <property type="entry name" value="MurCD N-terminal domain"/>
    <property type="match status" value="1"/>
</dbReference>
<dbReference type="SUPFAM" id="SSF53623">
    <property type="entry name" value="MurD-like peptide ligases, catalytic domain"/>
    <property type="match status" value="1"/>
</dbReference>
<dbReference type="SUPFAM" id="SSF53244">
    <property type="entry name" value="MurD-like peptide ligases, peptide-binding domain"/>
    <property type="match status" value="1"/>
</dbReference>
<protein>
    <recommendedName>
        <fullName evidence="1">UDP-N-acetylmuramate--L-alanine ligase</fullName>
        <ecNumber evidence="1">6.3.2.8</ecNumber>
    </recommendedName>
    <alternativeName>
        <fullName evidence="1">UDP-N-acetylmuramoyl-L-alanine synthetase</fullName>
    </alternativeName>
</protein>
<comment type="function">
    <text evidence="1">Cell wall formation.</text>
</comment>
<comment type="catalytic activity">
    <reaction evidence="1">
        <text>UDP-N-acetyl-alpha-D-muramate + L-alanine + ATP = UDP-N-acetyl-alpha-D-muramoyl-L-alanine + ADP + phosphate + H(+)</text>
        <dbReference type="Rhea" id="RHEA:23372"/>
        <dbReference type="ChEBI" id="CHEBI:15378"/>
        <dbReference type="ChEBI" id="CHEBI:30616"/>
        <dbReference type="ChEBI" id="CHEBI:43474"/>
        <dbReference type="ChEBI" id="CHEBI:57972"/>
        <dbReference type="ChEBI" id="CHEBI:70757"/>
        <dbReference type="ChEBI" id="CHEBI:83898"/>
        <dbReference type="ChEBI" id="CHEBI:456216"/>
        <dbReference type="EC" id="6.3.2.8"/>
    </reaction>
</comment>
<comment type="pathway">
    <text evidence="1">Cell wall biogenesis; peptidoglycan biosynthesis.</text>
</comment>
<comment type="subcellular location">
    <subcellularLocation>
        <location evidence="1">Cytoplasm</location>
    </subcellularLocation>
</comment>
<comment type="similarity">
    <text evidence="1">Belongs to the MurCDEF family.</text>
</comment>
<name>MURC_LACGA</name>
<feature type="chain" id="PRO_1000004358" description="UDP-N-acetylmuramate--L-alanine ligase">
    <location>
        <begin position="1"/>
        <end position="437"/>
    </location>
</feature>
<feature type="binding site" evidence="1">
    <location>
        <begin position="114"/>
        <end position="120"/>
    </location>
    <ligand>
        <name>ATP</name>
        <dbReference type="ChEBI" id="CHEBI:30616"/>
    </ligand>
</feature>
<proteinExistence type="inferred from homology"/>
<evidence type="ECO:0000255" key="1">
    <source>
        <dbReference type="HAMAP-Rule" id="MF_00046"/>
    </source>
</evidence>
<keyword id="KW-0067">ATP-binding</keyword>
<keyword id="KW-0131">Cell cycle</keyword>
<keyword id="KW-0132">Cell division</keyword>
<keyword id="KW-0133">Cell shape</keyword>
<keyword id="KW-0961">Cell wall biogenesis/degradation</keyword>
<keyword id="KW-0963">Cytoplasm</keyword>
<keyword id="KW-0436">Ligase</keyword>
<keyword id="KW-0547">Nucleotide-binding</keyword>
<keyword id="KW-0573">Peptidoglycan synthesis</keyword>
<sequence>MLDKNKQIWFIGIKGTGMASLALVLHDLGYNVAGSDIEKYTFTQVPLEKAGIEVKDFDPANIKSNDEQVIVKGNAFKQDNPEVAACLDKNVEWQSYPDTVEEIVQMHTSIGVSGTHGKTSTTSLLAHVLGEVAPTSYLIGDGRGKGVADSRFFVYEADEYRRHFLAYHPDYQIMTNIDFDHPDYFKDQDDYTSAFQTAADQTKKALFVWGDDKRLQSLKTDIPKYTYGFKDTDDFQAVNIEKTTTGSKFNVLAHGKDLGRFEIHLFGDHSILNTTAVIAVAYTEKVPMEDIKEGLLTFKGAKRRFAEKDFGDVSVIDDYAHHPTEMRATIQAARQKFPDKELVVVFQPHTFSRTKKYQKDFEEILRDVDKAYVTPIYASAREASGDISSEDLVNNIPGSEVIDLDNIADLTKHKNAVVVFMGAGDIPKYEDAYEKLL</sequence>